<reference key="1">
    <citation type="journal article" date="2006" name="Mol. Phylogenet. Evol.">
        <title>Dispersal and vicariance: the complex evolutionary history of boid snakes.</title>
        <authorList>
            <person name="Noonan B.P."/>
            <person name="Chippindale P.T."/>
        </authorList>
    </citation>
    <scope>NUCLEOTIDE SEQUENCE [GENOMIC DNA]</scope>
</reference>
<sequence length="217" mass="24484">PMKEVSIRGQGSLAYPGLRTQGNLETLSGPNDATRGLTSLADTFEHVIEELLDEQQVIQPSKENKDADLYSSRVMLSSQVPLEPPLLFLLEEYKNYLDAANMSMRVRRHSDPARRGELSVCDSTSEWVTAAEKKTAVDMSGATVTVLEKVPVPKGQLKQYFYETKCSSKGYAKEGCRGIDKRYWNSQCRTTQSYVRALTMDNKKRVGWRFIRIDTSC</sequence>
<organism>
    <name type="scientific">Sanzinia madagascariensis</name>
    <name type="common">Madagascar tree boa</name>
    <name type="synonym">Boa manditra</name>
    <dbReference type="NCBI Taxonomy" id="51881"/>
    <lineage>
        <taxon>Eukaryota</taxon>
        <taxon>Metazoa</taxon>
        <taxon>Chordata</taxon>
        <taxon>Craniata</taxon>
        <taxon>Vertebrata</taxon>
        <taxon>Euteleostomi</taxon>
        <taxon>Lepidosauria</taxon>
        <taxon>Squamata</taxon>
        <taxon>Bifurcata</taxon>
        <taxon>Unidentata</taxon>
        <taxon>Episquamata</taxon>
        <taxon>Toxicofera</taxon>
        <taxon>Serpentes</taxon>
        <taxon>Henophidia</taxon>
        <taxon>Boidae</taxon>
        <taxon>Boinae</taxon>
        <taxon>Sanzinia</taxon>
    </lineage>
</organism>
<keyword id="KW-0165">Cleavage on pair of basic residues</keyword>
<keyword id="KW-1015">Disulfide bond</keyword>
<keyword id="KW-0325">Glycoprotein</keyword>
<keyword id="KW-0339">Growth factor</keyword>
<keyword id="KW-0964">Secreted</keyword>
<proteinExistence type="inferred from homology"/>
<evidence type="ECO:0000250" key="1"/>
<evidence type="ECO:0000255" key="2"/>
<evidence type="ECO:0000305" key="3"/>
<accession>Q1X705</accession>
<protein>
    <recommendedName>
        <fullName evidence="3">Neurotrophic factor BDNF precursor form</fullName>
        <shortName>proBDNF</shortName>
    </recommendedName>
    <alternativeName>
        <fullName>Brain-derived neurotrophic factor</fullName>
    </alternativeName>
    <component>
        <recommendedName>
            <fullName>Neurotrophic factor BDNF</fullName>
        </recommendedName>
    </component>
</protein>
<feature type="propeptide" id="PRO_0000346697" evidence="1">
    <location>
        <begin position="1" status="less than"/>
        <end position="108"/>
    </location>
</feature>
<feature type="chain" id="PRO_0000346698" description="Neurotrophic factor BDNF">
    <location>
        <begin position="109"/>
        <end position="217" status="greater than"/>
    </location>
</feature>
<feature type="glycosylation site" description="N-linked (GlcNAc...) asparagine" evidence="2">
    <location>
        <position position="101"/>
    </location>
</feature>
<feature type="disulfide bond" evidence="1">
    <location>
        <begin position="121"/>
        <end position="188"/>
    </location>
</feature>
<feature type="disulfide bond" evidence="1">
    <location>
        <begin position="166"/>
        <end position="217"/>
    </location>
</feature>
<feature type="non-terminal residue">
    <location>
        <position position="1"/>
    </location>
</feature>
<feature type="non-terminal residue">
    <location>
        <position position="217"/>
    </location>
</feature>
<name>BDNF_SANME</name>
<gene>
    <name type="primary">BDNF</name>
</gene>
<comment type="function">
    <text evidence="1">Promotes the survival of neuronal populations that are all located either in the central nervous system or directly connected to it.</text>
</comment>
<comment type="subcellular location">
    <subcellularLocation>
        <location evidence="1">Secreted</location>
    </subcellularLocation>
</comment>
<comment type="similarity">
    <text evidence="3">Belongs to the NGF-beta family.</text>
</comment>
<dbReference type="EMBL" id="AY988033">
    <property type="protein sequence ID" value="AAY44240.1"/>
    <property type="molecule type" value="Genomic_DNA"/>
</dbReference>
<dbReference type="SMR" id="Q1X705"/>
<dbReference type="GlyCosmos" id="Q1X705">
    <property type="glycosylation" value="1 site, No reported glycans"/>
</dbReference>
<dbReference type="GO" id="GO:0030424">
    <property type="term" value="C:axon"/>
    <property type="evidence" value="ECO:0007669"/>
    <property type="project" value="TreeGrafter"/>
</dbReference>
<dbReference type="GO" id="GO:0030425">
    <property type="term" value="C:dendrite"/>
    <property type="evidence" value="ECO:0007669"/>
    <property type="project" value="TreeGrafter"/>
</dbReference>
<dbReference type="GO" id="GO:0005615">
    <property type="term" value="C:extracellular space"/>
    <property type="evidence" value="ECO:0007669"/>
    <property type="project" value="TreeGrafter"/>
</dbReference>
<dbReference type="GO" id="GO:0008021">
    <property type="term" value="C:synaptic vesicle"/>
    <property type="evidence" value="ECO:0007669"/>
    <property type="project" value="TreeGrafter"/>
</dbReference>
<dbReference type="GO" id="GO:0008083">
    <property type="term" value="F:growth factor activity"/>
    <property type="evidence" value="ECO:0007669"/>
    <property type="project" value="UniProtKB-KW"/>
</dbReference>
<dbReference type="GO" id="GO:0005163">
    <property type="term" value="F:nerve growth factor receptor binding"/>
    <property type="evidence" value="ECO:0007669"/>
    <property type="project" value="TreeGrafter"/>
</dbReference>
<dbReference type="GO" id="GO:0007169">
    <property type="term" value="P:cell surface receptor protein tyrosine kinase signaling pathway"/>
    <property type="evidence" value="ECO:0007669"/>
    <property type="project" value="TreeGrafter"/>
</dbReference>
<dbReference type="GO" id="GO:0050804">
    <property type="term" value="P:modulation of chemical synaptic transmission"/>
    <property type="evidence" value="ECO:0007669"/>
    <property type="project" value="TreeGrafter"/>
</dbReference>
<dbReference type="GO" id="GO:0043524">
    <property type="term" value="P:negative regulation of neuron apoptotic process"/>
    <property type="evidence" value="ECO:0007669"/>
    <property type="project" value="TreeGrafter"/>
</dbReference>
<dbReference type="GO" id="GO:0021675">
    <property type="term" value="P:nerve development"/>
    <property type="evidence" value="ECO:0007669"/>
    <property type="project" value="TreeGrafter"/>
</dbReference>
<dbReference type="GO" id="GO:0038180">
    <property type="term" value="P:nerve growth factor signaling pathway"/>
    <property type="evidence" value="ECO:0007669"/>
    <property type="project" value="TreeGrafter"/>
</dbReference>
<dbReference type="GO" id="GO:0048812">
    <property type="term" value="P:neuron projection morphogenesis"/>
    <property type="evidence" value="ECO:0007669"/>
    <property type="project" value="TreeGrafter"/>
</dbReference>
<dbReference type="FunFam" id="2.10.90.10:FF:000002">
    <property type="entry name" value="Brain-derived neurotrophic factor"/>
    <property type="match status" value="1"/>
</dbReference>
<dbReference type="Gene3D" id="2.10.90.10">
    <property type="entry name" value="Cystine-knot cytokines"/>
    <property type="match status" value="1"/>
</dbReference>
<dbReference type="InterPro" id="IPR020430">
    <property type="entry name" value="Brain-der_neurotrophic_factor"/>
</dbReference>
<dbReference type="InterPro" id="IPR029034">
    <property type="entry name" value="Cystine-knot_cytokine"/>
</dbReference>
<dbReference type="InterPro" id="IPR020408">
    <property type="entry name" value="Nerve_growth_factor-like"/>
</dbReference>
<dbReference type="InterPro" id="IPR002072">
    <property type="entry name" value="Nerve_growth_factor-rel"/>
</dbReference>
<dbReference type="InterPro" id="IPR019846">
    <property type="entry name" value="Nerve_growth_factor_CS"/>
</dbReference>
<dbReference type="PANTHER" id="PTHR11589:SF3">
    <property type="entry name" value="BRAIN-DERIVED NEUROTROPHIC FACTOR"/>
    <property type="match status" value="1"/>
</dbReference>
<dbReference type="PANTHER" id="PTHR11589">
    <property type="entry name" value="NERVE GROWTH FACTOR NGF -RELATED"/>
    <property type="match status" value="1"/>
</dbReference>
<dbReference type="Pfam" id="PF00243">
    <property type="entry name" value="NGF"/>
    <property type="match status" value="1"/>
</dbReference>
<dbReference type="PIRSF" id="PIRSF001789">
    <property type="entry name" value="NGF"/>
    <property type="match status" value="1"/>
</dbReference>
<dbReference type="PRINTS" id="PR01912">
    <property type="entry name" value="BDNFACTOR"/>
</dbReference>
<dbReference type="PRINTS" id="PR00268">
    <property type="entry name" value="NGF"/>
</dbReference>
<dbReference type="SMART" id="SM00140">
    <property type="entry name" value="NGF"/>
    <property type="match status" value="1"/>
</dbReference>
<dbReference type="SUPFAM" id="SSF57501">
    <property type="entry name" value="Cystine-knot cytokines"/>
    <property type="match status" value="1"/>
</dbReference>
<dbReference type="PROSITE" id="PS00248">
    <property type="entry name" value="NGF_1"/>
    <property type="match status" value="1"/>
</dbReference>
<dbReference type="PROSITE" id="PS50270">
    <property type="entry name" value="NGF_2"/>
    <property type="match status" value="1"/>
</dbReference>